<evidence type="ECO:0000255" key="1">
    <source>
        <dbReference type="HAMAP-Rule" id="MF_01886"/>
    </source>
</evidence>
<evidence type="ECO:0000305" key="2"/>
<name>TMCA_YERPD</name>
<comment type="function">
    <text evidence="1">Catalyzes the formation of N(4)-acetylcytidine (ac(4)C) at the wobble position of tRNA(Met), by using acetyl-CoA as an acetyl donor and ATP (or GTP).</text>
</comment>
<comment type="catalytic activity">
    <reaction evidence="1">
        <text>cytidine(34) in elongator tRNA(Met) + acetyl-CoA + ATP + H2O = N(4)-acetylcytidine(34) in elongator tRNA(Met) + ADP + phosphate + CoA + H(+)</text>
        <dbReference type="Rhea" id="RHEA:43788"/>
        <dbReference type="Rhea" id="RHEA-COMP:10693"/>
        <dbReference type="Rhea" id="RHEA-COMP:10694"/>
        <dbReference type="ChEBI" id="CHEBI:15377"/>
        <dbReference type="ChEBI" id="CHEBI:15378"/>
        <dbReference type="ChEBI" id="CHEBI:30616"/>
        <dbReference type="ChEBI" id="CHEBI:43474"/>
        <dbReference type="ChEBI" id="CHEBI:57287"/>
        <dbReference type="ChEBI" id="CHEBI:57288"/>
        <dbReference type="ChEBI" id="CHEBI:74900"/>
        <dbReference type="ChEBI" id="CHEBI:82748"/>
        <dbReference type="ChEBI" id="CHEBI:456216"/>
        <dbReference type="EC" id="2.3.1.193"/>
    </reaction>
</comment>
<comment type="subcellular location">
    <subcellularLocation>
        <location evidence="1">Cytoplasm</location>
    </subcellularLocation>
</comment>
<comment type="similarity">
    <text evidence="1">Belongs to the RNA cytidine acetyltransferase family. TmcA subfamily.</text>
</comment>
<comment type="sequence caution" evidence="2">
    <conflict type="frameshift">
        <sequence resource="EMBL-CDS" id="ACY59585"/>
    </conflict>
</comment>
<comment type="sequence caution" evidence="2">
    <conflict type="frameshift">
        <sequence resource="EMBL-CDS" id="ACY59586"/>
    </conflict>
</comment>
<reference key="1">
    <citation type="journal article" date="2009" name="Am. J. Trop. Med. Hyg.">
        <title>Spatial variation of Yersinia pestis from Yunnan Province of China.</title>
        <authorList>
            <person name="Zhang Z."/>
            <person name="Hai R."/>
            <person name="Song Z."/>
            <person name="Xia L."/>
            <person name="Liang Y."/>
            <person name="Cai H."/>
            <person name="Liang Y."/>
            <person name="Shen X."/>
            <person name="Zhang E."/>
            <person name="Xu J."/>
            <person name="Yu D."/>
            <person name="Yu X.J."/>
        </authorList>
    </citation>
    <scope>NUCLEOTIDE SEQUENCE [LARGE SCALE GENOMIC DNA]</scope>
    <source>
        <strain>D106004</strain>
    </source>
</reference>
<sequence length="699" mass="78263">MTNPIVASQPQMAQQGIRRLLILSGQADWSRQQAIMLRQHLAGDWLWLSEQPPEGVNSISPTAARTLLGQENLHGVFDATDGLNIEALAIVAGTLRAGSWLLLLVPEWDDWPQRPDKDSLRWSEQPAPIVTANFIRHLQRQFLADPDVVLWQQDRPLILPAVGSRPCWQQPDGSPTAQQQHILQRLMQADSGIWVLTAARGRGKSTLAGMLVTHWQGACWVTGPGKAATQVLNQQAGERARFWAPDALLDYCQRHDVSDIDWLLIDEAAAIPTPLLSALLAYFPRALLTTTVQGYEGTGRGFLLKFCATLGDWHHLTLTDPIRWATDDPLERVMDNAMLFHDELLGNHPLPKRPPVAQIEIPLYEQRDWRDNPELLRRFYGLLSTAHYRTTPLDLRRLMDAPGMHFSAARVADAVIGALWLVDEGGLSEALALDVWAGRRRPRGNLVAQSLAAHSGQWQAPTLLSRRISRVAVTAAWRQQGIARRMIAAEQAHARQQQCDFLSVSFGYTAELAHFWHRCGFRLVRIGSHKEASSGCYTAMALLPLSPAGEALCQAAQQQLKRDWYWLQQWIGIPTPVFLRLPEPPEVTLTDDDWRELAGFAFAFRPLEASLPALQRLLLHTELPLSALRHYLQLRTPQSEIINTLGLIGRKALVALWRQEAAEGMAMIDVDKMIMSAKPSARCSTVRLPGRKNLTICQC</sequence>
<feature type="chain" id="PRO_0000403128" description="tRNA(Met) cytidine acetyltransferase TmcA">
    <location>
        <begin position="1"/>
        <end position="699"/>
    </location>
</feature>
<feature type="domain" description="N-acetyltransferase" evidence="1">
    <location>
        <begin position="359"/>
        <end position="543"/>
    </location>
</feature>
<feature type="binding site" evidence="1">
    <location>
        <position position="179"/>
    </location>
    <ligand>
        <name>ATP</name>
        <dbReference type="ChEBI" id="CHEBI:30616"/>
    </ligand>
</feature>
<feature type="binding site" evidence="1">
    <location>
        <begin position="201"/>
        <end position="210"/>
    </location>
    <ligand>
        <name>ATP</name>
        <dbReference type="ChEBI" id="CHEBI:30616"/>
    </ligand>
</feature>
<feature type="binding site" evidence="1">
    <location>
        <position position="323"/>
    </location>
    <ligand>
        <name>ATP</name>
        <dbReference type="ChEBI" id="CHEBI:30616"/>
    </ligand>
</feature>
<feature type="binding site" evidence="1">
    <location>
        <begin position="471"/>
        <end position="473"/>
    </location>
    <ligand>
        <name>acetyl-CoA</name>
        <dbReference type="ChEBI" id="CHEBI:57288"/>
    </ligand>
</feature>
<feature type="binding site" evidence="1">
    <location>
        <position position="511"/>
    </location>
    <ligand>
        <name>acetyl-CoA</name>
        <dbReference type="ChEBI" id="CHEBI:57288"/>
    </ligand>
</feature>
<feature type="binding site" evidence="1">
    <location>
        <position position="518"/>
    </location>
    <ligand>
        <name>acetyl-CoA</name>
        <dbReference type="ChEBI" id="CHEBI:57288"/>
    </ligand>
</feature>
<organism>
    <name type="scientific">Yersinia pestis (strain D106004)</name>
    <dbReference type="NCBI Taxonomy" id="637382"/>
    <lineage>
        <taxon>Bacteria</taxon>
        <taxon>Pseudomonadati</taxon>
        <taxon>Pseudomonadota</taxon>
        <taxon>Gammaproteobacteria</taxon>
        <taxon>Enterobacterales</taxon>
        <taxon>Yersiniaceae</taxon>
        <taxon>Yersinia</taxon>
    </lineage>
</organism>
<proteinExistence type="inferred from homology"/>
<accession>D0JFM7</accession>
<accession>D0JFM6</accession>
<keyword id="KW-0012">Acyltransferase</keyword>
<keyword id="KW-0067">ATP-binding</keyword>
<keyword id="KW-0963">Cytoplasm</keyword>
<keyword id="KW-0547">Nucleotide-binding</keyword>
<keyword id="KW-0694">RNA-binding</keyword>
<keyword id="KW-0808">Transferase</keyword>
<keyword id="KW-0819">tRNA processing</keyword>
<keyword id="KW-0820">tRNA-binding</keyword>
<dbReference type="EC" id="2.3.1.193" evidence="1"/>
<dbReference type="EMBL" id="CP001585">
    <property type="protein sequence ID" value="ACY59585.1"/>
    <property type="status" value="ALT_FRAME"/>
    <property type="molecule type" value="Genomic_DNA"/>
</dbReference>
<dbReference type="EMBL" id="CP001585">
    <property type="protein sequence ID" value="ACY59586.1"/>
    <property type="status" value="ALT_FRAME"/>
    <property type="molecule type" value="Genomic_DNA"/>
</dbReference>
<dbReference type="SMR" id="D0JFM7"/>
<dbReference type="KEGG" id="ypd:YPD4_2678"/>
<dbReference type="KEGG" id="ypd:YPD4_2679"/>
<dbReference type="PATRIC" id="fig|637382.3.peg.3562"/>
<dbReference type="HOGENOM" id="CLU_085975_0_0_6"/>
<dbReference type="GO" id="GO:0005737">
    <property type="term" value="C:cytoplasm"/>
    <property type="evidence" value="ECO:0007669"/>
    <property type="project" value="UniProtKB-SubCell"/>
</dbReference>
<dbReference type="GO" id="GO:1990883">
    <property type="term" value="F:18S rRNA cytidine N-acetyltransferase activity"/>
    <property type="evidence" value="ECO:0007669"/>
    <property type="project" value="TreeGrafter"/>
</dbReference>
<dbReference type="GO" id="GO:0005524">
    <property type="term" value="F:ATP binding"/>
    <property type="evidence" value="ECO:0007669"/>
    <property type="project" value="UniProtKB-UniRule"/>
</dbReference>
<dbReference type="GO" id="GO:0000049">
    <property type="term" value="F:tRNA binding"/>
    <property type="evidence" value="ECO:0007669"/>
    <property type="project" value="UniProtKB-UniRule"/>
</dbReference>
<dbReference type="GO" id="GO:0051392">
    <property type="term" value="F:tRNA N4-acetyltransferase activity"/>
    <property type="evidence" value="ECO:0007669"/>
    <property type="project" value="UniProtKB-UniRule"/>
</dbReference>
<dbReference type="GO" id="GO:1904812">
    <property type="term" value="P:rRNA acetylation involved in maturation of SSU-rRNA"/>
    <property type="evidence" value="ECO:0007669"/>
    <property type="project" value="TreeGrafter"/>
</dbReference>
<dbReference type="GO" id="GO:0051391">
    <property type="term" value="P:tRNA acetylation"/>
    <property type="evidence" value="ECO:0007669"/>
    <property type="project" value="UniProtKB-UniRule"/>
</dbReference>
<dbReference type="GO" id="GO:0002101">
    <property type="term" value="P:tRNA wobble cytosine modification"/>
    <property type="evidence" value="ECO:0007669"/>
    <property type="project" value="UniProtKB-UniRule"/>
</dbReference>
<dbReference type="CDD" id="cd04301">
    <property type="entry name" value="NAT_SF"/>
    <property type="match status" value="1"/>
</dbReference>
<dbReference type="FunFam" id="3.40.50.11040:FF:000003">
    <property type="entry name" value="tRNA(Met) cytidine acetyltransferase TmcA"/>
    <property type="match status" value="1"/>
</dbReference>
<dbReference type="FunFam" id="3.40.50.300:FF:001011">
    <property type="entry name" value="tRNA(Met) cytidine acetyltransferase TmcA"/>
    <property type="match status" value="1"/>
</dbReference>
<dbReference type="FunFam" id="3.40.630.30:FF:000054">
    <property type="entry name" value="tRNA(Met) cytidine acetyltransferase TmcA"/>
    <property type="match status" value="1"/>
</dbReference>
<dbReference type="Gene3D" id="3.40.50.11040">
    <property type="match status" value="1"/>
</dbReference>
<dbReference type="Gene3D" id="3.40.630.30">
    <property type="match status" value="1"/>
</dbReference>
<dbReference type="Gene3D" id="3.40.50.300">
    <property type="entry name" value="P-loop containing nucleotide triphosphate hydrolases"/>
    <property type="match status" value="1"/>
</dbReference>
<dbReference type="Gene3D" id="1.20.120.890">
    <property type="entry name" value="tRNA(Met) cytidine acetyltransferase, tail domain"/>
    <property type="match status" value="1"/>
</dbReference>
<dbReference type="HAMAP" id="MF_01886">
    <property type="entry name" value="tRNA_acetyltr_TmcA"/>
    <property type="match status" value="1"/>
</dbReference>
<dbReference type="InterPro" id="IPR016181">
    <property type="entry name" value="Acyl_CoA_acyltransferase"/>
</dbReference>
<dbReference type="InterPro" id="IPR000182">
    <property type="entry name" value="GNAT_dom"/>
</dbReference>
<dbReference type="InterPro" id="IPR007807">
    <property type="entry name" value="NAT10/TcmA_helicase"/>
</dbReference>
<dbReference type="InterPro" id="IPR027417">
    <property type="entry name" value="P-loop_NTPase"/>
</dbReference>
<dbReference type="InterPro" id="IPR032672">
    <property type="entry name" value="TmcA/NAT10/Kre33"/>
</dbReference>
<dbReference type="InterPro" id="IPR038321">
    <property type="entry name" value="TmcA_C_sf"/>
</dbReference>
<dbReference type="InterPro" id="IPR013562">
    <property type="entry name" value="TmcA_N"/>
</dbReference>
<dbReference type="InterPro" id="IPR033442">
    <property type="entry name" value="TmcA_tRNA_bind"/>
</dbReference>
<dbReference type="InterPro" id="IPR024914">
    <property type="entry name" value="tRNA_acetyltr_TmcA"/>
</dbReference>
<dbReference type="PANTHER" id="PTHR10925">
    <property type="entry name" value="N-ACETYLTRANSFERASE 10"/>
    <property type="match status" value="1"/>
</dbReference>
<dbReference type="PANTHER" id="PTHR10925:SF5">
    <property type="entry name" value="RNA CYTIDINE ACETYLTRANSFERASE"/>
    <property type="match status" value="1"/>
</dbReference>
<dbReference type="Pfam" id="PF13718">
    <property type="entry name" value="GNAT_acetyltr_2"/>
    <property type="match status" value="2"/>
</dbReference>
<dbReference type="Pfam" id="PF05127">
    <property type="entry name" value="NAT10_TcmA_helicase"/>
    <property type="match status" value="1"/>
</dbReference>
<dbReference type="Pfam" id="PF08351">
    <property type="entry name" value="TmcA_N"/>
    <property type="match status" value="1"/>
</dbReference>
<dbReference type="Pfam" id="PF17176">
    <property type="entry name" value="tRNA_bind_3"/>
    <property type="match status" value="1"/>
</dbReference>
<dbReference type="SUPFAM" id="SSF55729">
    <property type="entry name" value="Acyl-CoA N-acyltransferases (Nat)"/>
    <property type="match status" value="1"/>
</dbReference>
<dbReference type="SUPFAM" id="SSF52540">
    <property type="entry name" value="P-loop containing nucleoside triphosphate hydrolases"/>
    <property type="match status" value="1"/>
</dbReference>
<dbReference type="PROSITE" id="PS51186">
    <property type="entry name" value="GNAT"/>
    <property type="match status" value="1"/>
</dbReference>
<gene>
    <name evidence="1" type="primary">tmcA</name>
    <name type="ordered locus">YPD4_2678/YPD4_2679</name>
</gene>
<protein>
    <recommendedName>
        <fullName evidence="1">tRNA(Met) cytidine acetyltransferase TmcA</fullName>
        <ecNumber evidence="1">2.3.1.193</ecNumber>
    </recommendedName>
</protein>